<name>TPIS_MYCCT</name>
<keyword id="KW-0963">Cytoplasm</keyword>
<keyword id="KW-0312">Gluconeogenesis</keyword>
<keyword id="KW-0324">Glycolysis</keyword>
<keyword id="KW-0413">Isomerase</keyword>
<sequence length="248" mass="27719">MRKKVIFGNWKMNGTNKSLEDFLYQVDNKVNNSKITAGLAVPYVMLQTGIKLAKNVKIAAQNVHFELKGAYTGEISVSMLKEIGVEYVIIGHSERREMFFETDLDINKKAKILLENNMIPIICCGESLETKEQGKTIEFVNNQINLIYQNISKQDAIKTIIAYEPIWAIGTGKTANSLDAEEVCKKIRENLAKIYDNLTAEKITIQYGGSVKPSNIQEYLKMPNIDGALVGGASLLANDYLGLVNYNE</sequence>
<comment type="function">
    <text evidence="1">Involved in the gluconeogenesis. Catalyzes stereospecifically the conversion of dihydroxyacetone phosphate (DHAP) to D-glyceraldehyde-3-phosphate (G3P).</text>
</comment>
<comment type="catalytic activity">
    <reaction evidence="1">
        <text>D-glyceraldehyde 3-phosphate = dihydroxyacetone phosphate</text>
        <dbReference type="Rhea" id="RHEA:18585"/>
        <dbReference type="ChEBI" id="CHEBI:57642"/>
        <dbReference type="ChEBI" id="CHEBI:59776"/>
        <dbReference type="EC" id="5.3.1.1"/>
    </reaction>
</comment>
<comment type="pathway">
    <text evidence="1">Carbohydrate biosynthesis; gluconeogenesis.</text>
</comment>
<comment type="pathway">
    <text evidence="1">Carbohydrate degradation; glycolysis; D-glyceraldehyde 3-phosphate from glycerone phosphate: step 1/1.</text>
</comment>
<comment type="subunit">
    <text evidence="1">Homodimer.</text>
</comment>
<comment type="subcellular location">
    <subcellularLocation>
        <location evidence="1">Cytoplasm</location>
    </subcellularLocation>
</comment>
<comment type="similarity">
    <text evidence="1">Belongs to the triosephosphate isomerase family.</text>
</comment>
<evidence type="ECO:0000255" key="1">
    <source>
        <dbReference type="HAMAP-Rule" id="MF_00147"/>
    </source>
</evidence>
<protein>
    <recommendedName>
        <fullName evidence="1">Triosephosphate isomerase</fullName>
        <shortName evidence="1">TIM</shortName>
        <shortName evidence="1">TPI</shortName>
        <ecNumber evidence="1">5.3.1.1</ecNumber>
    </recommendedName>
    <alternativeName>
        <fullName evidence="1">Triose-phosphate isomerase</fullName>
    </alternativeName>
</protein>
<proteinExistence type="inferred from homology"/>
<feature type="chain" id="PRO_1000058114" description="Triosephosphate isomerase">
    <location>
        <begin position="1"/>
        <end position="248"/>
    </location>
</feature>
<feature type="active site" description="Electrophile" evidence="1">
    <location>
        <position position="92"/>
    </location>
</feature>
<feature type="active site" description="Proton acceptor" evidence="1">
    <location>
        <position position="164"/>
    </location>
</feature>
<feature type="binding site" evidence="1">
    <location>
        <begin position="9"/>
        <end position="11"/>
    </location>
    <ligand>
        <name>substrate</name>
    </ligand>
</feature>
<feature type="binding site" evidence="1">
    <location>
        <position position="170"/>
    </location>
    <ligand>
        <name>substrate</name>
    </ligand>
</feature>
<feature type="binding site" evidence="1">
    <location>
        <position position="210"/>
    </location>
    <ligand>
        <name>substrate</name>
    </ligand>
</feature>
<feature type="binding site" evidence="1">
    <location>
        <begin position="231"/>
        <end position="232"/>
    </location>
    <ligand>
        <name>substrate</name>
    </ligand>
</feature>
<accession>Q2SRB2</accession>
<dbReference type="EC" id="5.3.1.1" evidence="1"/>
<dbReference type="EMBL" id="CP000123">
    <property type="protein sequence ID" value="ABC01325.1"/>
    <property type="molecule type" value="Genomic_DNA"/>
</dbReference>
<dbReference type="RefSeq" id="WP_011387585.1">
    <property type="nucleotide sequence ID" value="NC_007633.1"/>
</dbReference>
<dbReference type="SMR" id="Q2SRB2"/>
<dbReference type="GeneID" id="23778296"/>
<dbReference type="KEGG" id="mcp:MCAP_0750"/>
<dbReference type="HOGENOM" id="CLU_024251_2_3_14"/>
<dbReference type="PhylomeDB" id="Q2SRB2"/>
<dbReference type="UniPathway" id="UPA00109">
    <property type="reaction ID" value="UER00189"/>
</dbReference>
<dbReference type="UniPathway" id="UPA00138"/>
<dbReference type="Proteomes" id="UP000001928">
    <property type="component" value="Chromosome"/>
</dbReference>
<dbReference type="GO" id="GO:0005829">
    <property type="term" value="C:cytosol"/>
    <property type="evidence" value="ECO:0007669"/>
    <property type="project" value="TreeGrafter"/>
</dbReference>
<dbReference type="GO" id="GO:0004807">
    <property type="term" value="F:triose-phosphate isomerase activity"/>
    <property type="evidence" value="ECO:0007669"/>
    <property type="project" value="UniProtKB-UniRule"/>
</dbReference>
<dbReference type="GO" id="GO:0006094">
    <property type="term" value="P:gluconeogenesis"/>
    <property type="evidence" value="ECO:0007669"/>
    <property type="project" value="UniProtKB-UniRule"/>
</dbReference>
<dbReference type="GO" id="GO:0046166">
    <property type="term" value="P:glyceraldehyde-3-phosphate biosynthetic process"/>
    <property type="evidence" value="ECO:0007669"/>
    <property type="project" value="TreeGrafter"/>
</dbReference>
<dbReference type="GO" id="GO:0019563">
    <property type="term" value="P:glycerol catabolic process"/>
    <property type="evidence" value="ECO:0007669"/>
    <property type="project" value="TreeGrafter"/>
</dbReference>
<dbReference type="GO" id="GO:0006096">
    <property type="term" value="P:glycolytic process"/>
    <property type="evidence" value="ECO:0007669"/>
    <property type="project" value="UniProtKB-UniRule"/>
</dbReference>
<dbReference type="CDD" id="cd00311">
    <property type="entry name" value="TIM"/>
    <property type="match status" value="1"/>
</dbReference>
<dbReference type="FunFam" id="3.20.20.70:FF:000016">
    <property type="entry name" value="Triosephosphate isomerase"/>
    <property type="match status" value="1"/>
</dbReference>
<dbReference type="Gene3D" id="3.20.20.70">
    <property type="entry name" value="Aldolase class I"/>
    <property type="match status" value="1"/>
</dbReference>
<dbReference type="HAMAP" id="MF_00147_B">
    <property type="entry name" value="TIM_B"/>
    <property type="match status" value="1"/>
</dbReference>
<dbReference type="InterPro" id="IPR013785">
    <property type="entry name" value="Aldolase_TIM"/>
</dbReference>
<dbReference type="InterPro" id="IPR035990">
    <property type="entry name" value="TIM_sf"/>
</dbReference>
<dbReference type="InterPro" id="IPR022896">
    <property type="entry name" value="TrioseP_Isoase_bac/euk"/>
</dbReference>
<dbReference type="InterPro" id="IPR000652">
    <property type="entry name" value="Triosephosphate_isomerase"/>
</dbReference>
<dbReference type="InterPro" id="IPR020861">
    <property type="entry name" value="Triosephosphate_isomerase_AS"/>
</dbReference>
<dbReference type="NCBIfam" id="TIGR00419">
    <property type="entry name" value="tim"/>
    <property type="match status" value="1"/>
</dbReference>
<dbReference type="PANTHER" id="PTHR21139">
    <property type="entry name" value="TRIOSEPHOSPHATE ISOMERASE"/>
    <property type="match status" value="1"/>
</dbReference>
<dbReference type="PANTHER" id="PTHR21139:SF42">
    <property type="entry name" value="TRIOSEPHOSPHATE ISOMERASE"/>
    <property type="match status" value="1"/>
</dbReference>
<dbReference type="Pfam" id="PF00121">
    <property type="entry name" value="TIM"/>
    <property type="match status" value="1"/>
</dbReference>
<dbReference type="SUPFAM" id="SSF51351">
    <property type="entry name" value="Triosephosphate isomerase (TIM)"/>
    <property type="match status" value="1"/>
</dbReference>
<dbReference type="PROSITE" id="PS00171">
    <property type="entry name" value="TIM_1"/>
    <property type="match status" value="1"/>
</dbReference>
<dbReference type="PROSITE" id="PS51440">
    <property type="entry name" value="TIM_2"/>
    <property type="match status" value="1"/>
</dbReference>
<organism>
    <name type="scientific">Mycoplasma capricolum subsp. capricolum (strain California kid / ATCC 27343 / NCTC 10154)</name>
    <dbReference type="NCBI Taxonomy" id="340047"/>
    <lineage>
        <taxon>Bacteria</taxon>
        <taxon>Bacillati</taxon>
        <taxon>Mycoplasmatota</taxon>
        <taxon>Mollicutes</taxon>
        <taxon>Mycoplasmataceae</taxon>
        <taxon>Mycoplasma</taxon>
    </lineage>
</organism>
<gene>
    <name evidence="1" type="primary">tpiA</name>
    <name type="ordered locus">MCAP_0750</name>
</gene>
<reference key="1">
    <citation type="submission" date="2005-09" db="EMBL/GenBank/DDBJ databases">
        <authorList>
            <person name="Glass J.I."/>
            <person name="Lartigue C."/>
            <person name="Pfannkoch C."/>
            <person name="Baden-Tillson H."/>
            <person name="Smith H.O."/>
            <person name="Venter J.C."/>
            <person name="Roske K."/>
            <person name="Wise K.S."/>
            <person name="Calcutt M.J."/>
            <person name="Nelson W.C."/>
            <person name="Nierman W.C."/>
        </authorList>
    </citation>
    <scope>NUCLEOTIDE SEQUENCE [LARGE SCALE GENOMIC DNA]</scope>
    <source>
        <strain>California kid / ATCC 27343 / NCTC 10154</strain>
    </source>
</reference>